<keyword id="KW-0963">Cytoplasm</keyword>
<keyword id="KW-0488">Methylation</keyword>
<keyword id="KW-0648">Protein biosynthesis</keyword>
<name>RF1_TREPS</name>
<comment type="function">
    <text evidence="1">Peptide chain release factor 1 directs the termination of translation in response to the peptide chain termination codons UAG and UAA.</text>
</comment>
<comment type="subcellular location">
    <subcellularLocation>
        <location evidence="1">Cytoplasm</location>
    </subcellularLocation>
</comment>
<comment type="PTM">
    <text evidence="1">Methylated by PrmC. Methylation increases the termination efficiency of RF1.</text>
</comment>
<comment type="similarity">
    <text evidence="1">Belongs to the prokaryotic/mitochondrial release factor family.</text>
</comment>
<gene>
    <name evidence="1" type="primary">prfA</name>
    <name type="ordered locus">TPASS_0051</name>
</gene>
<sequence length="351" mass="40205">MIEKLEELRAQWRKLQQEVENPSLFSSTQSYRERMRDHAYLSRLMEEYDRYLLTEKQLEDAHVLIQDESDADFKDVIRQEIRTLEAALHTSQKRLKTLLIPPDPLQEKNIIMEIRGGTGGDEAALFAADLFRMYTHYAESKQWRYEVLAVSETELGGFKEITFSISGRDVYGSLRYESGVHRVQRVPSTEASGRIHTSAVTVAVLPEMEETEVDIRAEDVRVDVMRASGPGGQCVNTTDSAVRLTHLPTGIVVVCQDEKSQIKNKAKAMRVLRSRVYDLEESKRQVARARERKSQVGSGDRSERIRTYNFPQNRVTDHRVRVTLYKLDAVMQGALDDIIEPLCIASRESVI</sequence>
<accession>B2S1Z9</accession>
<organism>
    <name type="scientific">Treponema pallidum subsp. pallidum (strain SS14)</name>
    <dbReference type="NCBI Taxonomy" id="455434"/>
    <lineage>
        <taxon>Bacteria</taxon>
        <taxon>Pseudomonadati</taxon>
        <taxon>Spirochaetota</taxon>
        <taxon>Spirochaetia</taxon>
        <taxon>Spirochaetales</taxon>
        <taxon>Treponemataceae</taxon>
        <taxon>Treponema</taxon>
    </lineage>
</organism>
<protein>
    <recommendedName>
        <fullName evidence="1">Peptide chain release factor 1</fullName>
        <shortName evidence="1">RF-1</shortName>
    </recommendedName>
</protein>
<feature type="chain" id="PRO_1000093519" description="Peptide chain release factor 1">
    <location>
        <begin position="1"/>
        <end position="351"/>
    </location>
</feature>
<feature type="modified residue" description="N5-methylglutamine" evidence="1">
    <location>
        <position position="233"/>
    </location>
</feature>
<dbReference type="EMBL" id="CP000805">
    <property type="protein sequence ID" value="ACD70478.1"/>
    <property type="molecule type" value="Genomic_DNA"/>
</dbReference>
<dbReference type="RefSeq" id="WP_012460512.1">
    <property type="nucleotide sequence ID" value="NC_021508.1"/>
</dbReference>
<dbReference type="SMR" id="B2S1Z9"/>
<dbReference type="KEGG" id="tpp:TPASS_0051"/>
<dbReference type="PATRIC" id="fig|455434.6.peg.48"/>
<dbReference type="Proteomes" id="UP000001202">
    <property type="component" value="Chromosome"/>
</dbReference>
<dbReference type="GO" id="GO:0005737">
    <property type="term" value="C:cytoplasm"/>
    <property type="evidence" value="ECO:0007669"/>
    <property type="project" value="UniProtKB-SubCell"/>
</dbReference>
<dbReference type="GO" id="GO:0016149">
    <property type="term" value="F:translation release factor activity, codon specific"/>
    <property type="evidence" value="ECO:0007669"/>
    <property type="project" value="UniProtKB-UniRule"/>
</dbReference>
<dbReference type="FunFam" id="3.30.160.20:FF:000004">
    <property type="entry name" value="Peptide chain release factor 1"/>
    <property type="match status" value="1"/>
</dbReference>
<dbReference type="FunFam" id="3.30.70.1660:FF:000002">
    <property type="entry name" value="Peptide chain release factor 1"/>
    <property type="match status" value="1"/>
</dbReference>
<dbReference type="FunFam" id="3.30.70.1660:FF:000004">
    <property type="entry name" value="Peptide chain release factor 1"/>
    <property type="match status" value="1"/>
</dbReference>
<dbReference type="Gene3D" id="3.30.160.20">
    <property type="match status" value="1"/>
</dbReference>
<dbReference type="Gene3D" id="3.30.70.1660">
    <property type="match status" value="1"/>
</dbReference>
<dbReference type="Gene3D" id="6.10.140.1950">
    <property type="match status" value="1"/>
</dbReference>
<dbReference type="HAMAP" id="MF_00093">
    <property type="entry name" value="Rel_fac_1"/>
    <property type="match status" value="1"/>
</dbReference>
<dbReference type="InterPro" id="IPR005139">
    <property type="entry name" value="PCRF"/>
</dbReference>
<dbReference type="InterPro" id="IPR000352">
    <property type="entry name" value="Pep_chain_release_fac_I"/>
</dbReference>
<dbReference type="InterPro" id="IPR045853">
    <property type="entry name" value="Pep_chain_release_fac_I_sf"/>
</dbReference>
<dbReference type="InterPro" id="IPR050057">
    <property type="entry name" value="Prokaryotic/Mito_RF"/>
</dbReference>
<dbReference type="InterPro" id="IPR004373">
    <property type="entry name" value="RF-1"/>
</dbReference>
<dbReference type="NCBIfam" id="TIGR00019">
    <property type="entry name" value="prfA"/>
    <property type="match status" value="1"/>
</dbReference>
<dbReference type="NCBIfam" id="NF001859">
    <property type="entry name" value="PRK00591.1"/>
    <property type="match status" value="1"/>
</dbReference>
<dbReference type="PANTHER" id="PTHR43804">
    <property type="entry name" value="LD18447P"/>
    <property type="match status" value="1"/>
</dbReference>
<dbReference type="PANTHER" id="PTHR43804:SF7">
    <property type="entry name" value="LD18447P"/>
    <property type="match status" value="1"/>
</dbReference>
<dbReference type="Pfam" id="PF03462">
    <property type="entry name" value="PCRF"/>
    <property type="match status" value="1"/>
</dbReference>
<dbReference type="Pfam" id="PF00472">
    <property type="entry name" value="RF-1"/>
    <property type="match status" value="1"/>
</dbReference>
<dbReference type="SMART" id="SM00937">
    <property type="entry name" value="PCRF"/>
    <property type="match status" value="1"/>
</dbReference>
<dbReference type="SUPFAM" id="SSF75620">
    <property type="entry name" value="Release factor"/>
    <property type="match status" value="1"/>
</dbReference>
<dbReference type="PROSITE" id="PS00745">
    <property type="entry name" value="RF_PROK_I"/>
    <property type="match status" value="1"/>
</dbReference>
<proteinExistence type="inferred from homology"/>
<reference key="1">
    <citation type="journal article" date="2008" name="BMC Microbiol.">
        <title>Complete genome sequence of Treponema pallidum ssp. pallidum strain SS14 determined with oligonucleotide arrays.</title>
        <authorList>
            <person name="Matejkova P."/>
            <person name="Strouhal M."/>
            <person name="Smajs D."/>
            <person name="Norris S.J."/>
            <person name="Palzkill T."/>
            <person name="Petrosino J.F."/>
            <person name="Sodergren E."/>
            <person name="Norton J.E."/>
            <person name="Singh J."/>
            <person name="Richmond T.A."/>
            <person name="Molla M.N."/>
            <person name="Albert T.J."/>
            <person name="Weinstock G.M."/>
        </authorList>
    </citation>
    <scope>NUCLEOTIDE SEQUENCE [LARGE SCALE GENOMIC DNA]</scope>
    <source>
        <strain>SS14</strain>
    </source>
</reference>
<evidence type="ECO:0000255" key="1">
    <source>
        <dbReference type="HAMAP-Rule" id="MF_00093"/>
    </source>
</evidence>